<name>LPXC_PHEZH</name>
<accession>B4RFF2</accession>
<protein>
    <recommendedName>
        <fullName evidence="1">UDP-3-O-acyl-N-acetylglucosamine deacetylase</fullName>
        <shortName evidence="1">UDP-3-O-acyl-GlcNAc deacetylase</shortName>
        <ecNumber evidence="1">3.5.1.108</ecNumber>
    </recommendedName>
    <alternativeName>
        <fullName evidence="1">UDP-3-O-[R-3-hydroxymyristoyl]-N-acetylglucosamine deacetylase</fullName>
    </alternativeName>
</protein>
<organism>
    <name type="scientific">Phenylobacterium zucineum (strain HLK1)</name>
    <dbReference type="NCBI Taxonomy" id="450851"/>
    <lineage>
        <taxon>Bacteria</taxon>
        <taxon>Pseudomonadati</taxon>
        <taxon>Pseudomonadota</taxon>
        <taxon>Alphaproteobacteria</taxon>
        <taxon>Caulobacterales</taxon>
        <taxon>Caulobacteraceae</taxon>
        <taxon>Phenylobacterium</taxon>
    </lineage>
</organism>
<proteinExistence type="inferred from homology"/>
<gene>
    <name evidence="1" type="primary">lpxC</name>
    <name type="ordered locus">PHZ_c2312</name>
</gene>
<dbReference type="EC" id="3.5.1.108" evidence="1"/>
<dbReference type="EMBL" id="CP000747">
    <property type="protein sequence ID" value="ACG78722.1"/>
    <property type="molecule type" value="Genomic_DNA"/>
</dbReference>
<dbReference type="RefSeq" id="WP_012522863.1">
    <property type="nucleotide sequence ID" value="NC_011144.1"/>
</dbReference>
<dbReference type="SMR" id="B4RFF2"/>
<dbReference type="STRING" id="450851.PHZ_c2312"/>
<dbReference type="KEGG" id="pzu:PHZ_c2312"/>
<dbReference type="eggNOG" id="COG0774">
    <property type="taxonomic scope" value="Bacteria"/>
</dbReference>
<dbReference type="HOGENOM" id="CLU_046528_1_1_5"/>
<dbReference type="OrthoDB" id="9802746at2"/>
<dbReference type="UniPathway" id="UPA00359">
    <property type="reaction ID" value="UER00478"/>
</dbReference>
<dbReference type="Proteomes" id="UP000001868">
    <property type="component" value="Chromosome"/>
</dbReference>
<dbReference type="GO" id="GO:0016020">
    <property type="term" value="C:membrane"/>
    <property type="evidence" value="ECO:0007669"/>
    <property type="project" value="GOC"/>
</dbReference>
<dbReference type="GO" id="GO:0046872">
    <property type="term" value="F:metal ion binding"/>
    <property type="evidence" value="ECO:0007669"/>
    <property type="project" value="UniProtKB-KW"/>
</dbReference>
<dbReference type="GO" id="GO:0103117">
    <property type="term" value="F:UDP-3-O-acyl-N-acetylglucosamine deacetylase activity"/>
    <property type="evidence" value="ECO:0007669"/>
    <property type="project" value="UniProtKB-UniRule"/>
</dbReference>
<dbReference type="GO" id="GO:0009245">
    <property type="term" value="P:lipid A biosynthetic process"/>
    <property type="evidence" value="ECO:0007669"/>
    <property type="project" value="UniProtKB-UniRule"/>
</dbReference>
<dbReference type="Gene3D" id="3.30.230.20">
    <property type="entry name" value="lpxc deacetylase, domain 1"/>
    <property type="match status" value="1"/>
</dbReference>
<dbReference type="Gene3D" id="3.30.1700.10">
    <property type="entry name" value="lpxc deacetylase, domain 2"/>
    <property type="match status" value="1"/>
</dbReference>
<dbReference type="HAMAP" id="MF_00388">
    <property type="entry name" value="LpxC"/>
    <property type="match status" value="1"/>
</dbReference>
<dbReference type="InterPro" id="IPR020568">
    <property type="entry name" value="Ribosomal_Su5_D2-typ_SF"/>
</dbReference>
<dbReference type="InterPro" id="IPR004463">
    <property type="entry name" value="UDP-acyl_GlcNac_deAcase"/>
</dbReference>
<dbReference type="InterPro" id="IPR011334">
    <property type="entry name" value="UDP-acyl_GlcNac_deAcase_C"/>
</dbReference>
<dbReference type="InterPro" id="IPR015870">
    <property type="entry name" value="UDP-acyl_N-AcGlcN_deAcase_N"/>
</dbReference>
<dbReference type="NCBIfam" id="TIGR00325">
    <property type="entry name" value="lpxC"/>
    <property type="match status" value="1"/>
</dbReference>
<dbReference type="PANTHER" id="PTHR33694">
    <property type="entry name" value="UDP-3-O-ACYL-N-ACETYLGLUCOSAMINE DEACETYLASE 1, MITOCHONDRIAL-RELATED"/>
    <property type="match status" value="1"/>
</dbReference>
<dbReference type="PANTHER" id="PTHR33694:SF1">
    <property type="entry name" value="UDP-3-O-ACYL-N-ACETYLGLUCOSAMINE DEACETYLASE 1, MITOCHONDRIAL-RELATED"/>
    <property type="match status" value="1"/>
</dbReference>
<dbReference type="Pfam" id="PF03331">
    <property type="entry name" value="LpxC"/>
    <property type="match status" value="1"/>
</dbReference>
<dbReference type="SUPFAM" id="SSF54211">
    <property type="entry name" value="Ribosomal protein S5 domain 2-like"/>
    <property type="match status" value="2"/>
</dbReference>
<feature type="chain" id="PRO_1000122803" description="UDP-3-O-acyl-N-acetylglucosamine deacetylase">
    <location>
        <begin position="1"/>
        <end position="293"/>
    </location>
</feature>
<feature type="active site" description="Proton donor" evidence="1">
    <location>
        <position position="263"/>
    </location>
</feature>
<feature type="binding site" evidence="1">
    <location>
        <position position="79"/>
    </location>
    <ligand>
        <name>Zn(2+)</name>
        <dbReference type="ChEBI" id="CHEBI:29105"/>
    </ligand>
</feature>
<feature type="binding site" evidence="1">
    <location>
        <position position="236"/>
    </location>
    <ligand>
        <name>Zn(2+)</name>
        <dbReference type="ChEBI" id="CHEBI:29105"/>
    </ligand>
</feature>
<feature type="binding site" evidence="1">
    <location>
        <position position="240"/>
    </location>
    <ligand>
        <name>Zn(2+)</name>
        <dbReference type="ChEBI" id="CHEBI:29105"/>
    </ligand>
</feature>
<reference key="1">
    <citation type="journal article" date="2008" name="BMC Genomics">
        <title>Complete genome of Phenylobacterium zucineum - a novel facultative intracellular bacterium isolated from human erythroleukemia cell line K562.</title>
        <authorList>
            <person name="Luo Y."/>
            <person name="Xu X."/>
            <person name="Ding Z."/>
            <person name="Liu Z."/>
            <person name="Zhang B."/>
            <person name="Yan Z."/>
            <person name="Sun J."/>
            <person name="Hu S."/>
            <person name="Hu X."/>
        </authorList>
    </citation>
    <scope>NUCLEOTIDE SEQUENCE [LARGE SCALE GENOMIC DNA]</scope>
    <source>
        <strain>HLK1</strain>
    </source>
</reference>
<evidence type="ECO:0000255" key="1">
    <source>
        <dbReference type="HAMAP-Rule" id="MF_00388"/>
    </source>
</evidence>
<keyword id="KW-0378">Hydrolase</keyword>
<keyword id="KW-0441">Lipid A biosynthesis</keyword>
<keyword id="KW-0444">Lipid biosynthesis</keyword>
<keyword id="KW-0443">Lipid metabolism</keyword>
<keyword id="KW-0479">Metal-binding</keyword>
<keyword id="KW-1185">Reference proteome</keyword>
<keyword id="KW-0862">Zinc</keyword>
<sequence length="293" mass="31273">MFQHTVKAPALFAGVGVHTGAYTRVAVRPAAADTGIVFVRTDVSGSDNRIAVSPEAVCKTQLGTVVGNAAGVTVSTIEHLMAALVMLGVDNAVVEVDGPEMPIMDGSALPFVRVLDRAGRREQQAPRRYIEILAPVEVIDGDKRAALRPAEAFEVAFEIRFGSQAIGTQAIDLPMDEAAFRDELADCRTFGFLHEVEALRAMGLARGGSMENAVVIDGDRILNPEGLRRPDEFVRHKALDAIGDLFVLGAPVVGRFEGVLAGHGLNNALVRALAARPDAWRVRTFAEDLAEAV</sequence>
<comment type="function">
    <text evidence="1">Catalyzes the hydrolysis of UDP-3-O-myristoyl-N-acetylglucosamine to form UDP-3-O-myristoylglucosamine and acetate, the committed step in lipid A biosynthesis.</text>
</comment>
<comment type="catalytic activity">
    <reaction evidence="1">
        <text>a UDP-3-O-[(3R)-3-hydroxyacyl]-N-acetyl-alpha-D-glucosamine + H2O = a UDP-3-O-[(3R)-3-hydroxyacyl]-alpha-D-glucosamine + acetate</text>
        <dbReference type="Rhea" id="RHEA:67816"/>
        <dbReference type="ChEBI" id="CHEBI:15377"/>
        <dbReference type="ChEBI" id="CHEBI:30089"/>
        <dbReference type="ChEBI" id="CHEBI:137740"/>
        <dbReference type="ChEBI" id="CHEBI:173225"/>
        <dbReference type="EC" id="3.5.1.108"/>
    </reaction>
</comment>
<comment type="cofactor">
    <cofactor evidence="1">
        <name>Zn(2+)</name>
        <dbReference type="ChEBI" id="CHEBI:29105"/>
    </cofactor>
</comment>
<comment type="pathway">
    <text evidence="1">Glycolipid biosynthesis; lipid IV(A) biosynthesis; lipid IV(A) from (3R)-3-hydroxytetradecanoyl-[acyl-carrier-protein] and UDP-N-acetyl-alpha-D-glucosamine: step 2/6.</text>
</comment>
<comment type="similarity">
    <text evidence="1">Belongs to the LpxC family.</text>
</comment>